<keyword id="KW-0002">3D-structure</keyword>
<keyword id="KW-0007">Acetylation</keyword>
<keyword id="KW-0025">Alternative splicing</keyword>
<keyword id="KW-0131">Cell cycle</keyword>
<keyword id="KW-0132">Cell division</keyword>
<keyword id="KW-0160">Chromosomal rearrangement</keyword>
<keyword id="KW-0175">Coiled coil</keyword>
<keyword id="KW-0963">Cytoplasm</keyword>
<keyword id="KW-0206">Cytoskeleton</keyword>
<keyword id="KW-0903">Direct protein sequencing</keyword>
<keyword id="KW-0493">Microtubule</keyword>
<keyword id="KW-0498">Mitosis</keyword>
<keyword id="KW-0597">Phosphoprotein</keyword>
<keyword id="KW-1267">Proteomics identification</keyword>
<keyword id="KW-1185">Reference proteome</keyword>
<keyword id="KW-0677">Repeat</keyword>
<keyword id="KW-0853">WD repeat</keyword>
<accession>Q9HC35</accession>
<accession>A6H8Y6</accession>
<accession>A6P4T4</accession>
<accession>A6P4V4</accession>
<accession>B2RBK3</accession>
<accession>B2RTW7</accession>
<accession>B5MCW9</accession>
<accession>Q3SWW0</accession>
<accession>Q53R29</accession>
<accession>Q53TW8</accession>
<accession>Q6PJ45</accession>
<accession>Q9NV40</accession>
<name>EMAL4_HUMAN</name>
<reference key="1">
    <citation type="journal article" date="2000" name="Genomics">
        <title>Cloning and localization of C2orf2(ropp120), a previously unknown WD repeat protein.</title>
        <authorList>
            <person name="Heidebrecht H.J."/>
            <person name="Buck F."/>
            <person name="Pollmann M."/>
            <person name="Siebert R."/>
            <person name="Parwaresch R."/>
        </authorList>
    </citation>
    <scope>NUCLEOTIDE SEQUENCE [MRNA] (ISOFORM 1)</scope>
    <scope>PARTIAL PROTEIN SEQUENCE</scope>
    <scope>VARIANTS GLU-283 AND VAL-382</scope>
</reference>
<reference key="2">
    <citation type="submission" date="2001-04" db="EMBL/GenBank/DDBJ databases">
        <authorList>
            <person name="Heidebrecht H.J."/>
        </authorList>
    </citation>
    <scope>SEQUENCE REVISION TO 121 AND 398</scope>
</reference>
<reference key="3">
    <citation type="journal article" date="2004" name="Nat. Genet.">
        <title>Complete sequencing and characterization of 21,243 full-length human cDNAs.</title>
        <authorList>
            <person name="Ota T."/>
            <person name="Suzuki Y."/>
            <person name="Nishikawa T."/>
            <person name="Otsuki T."/>
            <person name="Sugiyama T."/>
            <person name="Irie R."/>
            <person name="Wakamatsu A."/>
            <person name="Hayashi K."/>
            <person name="Sato H."/>
            <person name="Nagai K."/>
            <person name="Kimura K."/>
            <person name="Makita H."/>
            <person name="Sekine M."/>
            <person name="Obayashi M."/>
            <person name="Nishi T."/>
            <person name="Shibahara T."/>
            <person name="Tanaka T."/>
            <person name="Ishii S."/>
            <person name="Yamamoto J."/>
            <person name="Saito K."/>
            <person name="Kawai Y."/>
            <person name="Isono Y."/>
            <person name="Nakamura Y."/>
            <person name="Nagahari K."/>
            <person name="Murakami K."/>
            <person name="Yasuda T."/>
            <person name="Iwayanagi T."/>
            <person name="Wagatsuma M."/>
            <person name="Shiratori A."/>
            <person name="Sudo H."/>
            <person name="Hosoiri T."/>
            <person name="Kaku Y."/>
            <person name="Kodaira H."/>
            <person name="Kondo H."/>
            <person name="Sugawara M."/>
            <person name="Takahashi M."/>
            <person name="Kanda K."/>
            <person name="Yokoi T."/>
            <person name="Furuya T."/>
            <person name="Kikkawa E."/>
            <person name="Omura Y."/>
            <person name="Abe K."/>
            <person name="Kamihara K."/>
            <person name="Katsuta N."/>
            <person name="Sato K."/>
            <person name="Tanikawa M."/>
            <person name="Yamazaki M."/>
            <person name="Ninomiya K."/>
            <person name="Ishibashi T."/>
            <person name="Yamashita H."/>
            <person name="Murakawa K."/>
            <person name="Fujimori K."/>
            <person name="Tanai H."/>
            <person name="Kimata M."/>
            <person name="Watanabe M."/>
            <person name="Hiraoka S."/>
            <person name="Chiba Y."/>
            <person name="Ishida S."/>
            <person name="Ono Y."/>
            <person name="Takiguchi S."/>
            <person name="Watanabe S."/>
            <person name="Yosida M."/>
            <person name="Hotuta T."/>
            <person name="Kusano J."/>
            <person name="Kanehori K."/>
            <person name="Takahashi-Fujii A."/>
            <person name="Hara H."/>
            <person name="Tanase T.-O."/>
            <person name="Nomura Y."/>
            <person name="Togiya S."/>
            <person name="Komai F."/>
            <person name="Hara R."/>
            <person name="Takeuchi K."/>
            <person name="Arita M."/>
            <person name="Imose N."/>
            <person name="Musashino K."/>
            <person name="Yuuki H."/>
            <person name="Oshima A."/>
            <person name="Sasaki N."/>
            <person name="Aotsuka S."/>
            <person name="Yoshikawa Y."/>
            <person name="Matsunawa H."/>
            <person name="Ichihara T."/>
            <person name="Shiohata N."/>
            <person name="Sano S."/>
            <person name="Moriya S."/>
            <person name="Momiyama H."/>
            <person name="Satoh N."/>
            <person name="Takami S."/>
            <person name="Terashima Y."/>
            <person name="Suzuki O."/>
            <person name="Nakagawa S."/>
            <person name="Senoh A."/>
            <person name="Mizoguchi H."/>
            <person name="Goto Y."/>
            <person name="Shimizu F."/>
            <person name="Wakebe H."/>
            <person name="Hishigaki H."/>
            <person name="Watanabe T."/>
            <person name="Sugiyama A."/>
            <person name="Takemoto M."/>
            <person name="Kawakami B."/>
            <person name="Yamazaki M."/>
            <person name="Watanabe K."/>
            <person name="Kumagai A."/>
            <person name="Itakura S."/>
            <person name="Fukuzumi Y."/>
            <person name="Fujimori Y."/>
            <person name="Komiyama M."/>
            <person name="Tashiro H."/>
            <person name="Tanigami A."/>
            <person name="Fujiwara T."/>
            <person name="Ono T."/>
            <person name="Yamada K."/>
            <person name="Fujii Y."/>
            <person name="Ozaki K."/>
            <person name="Hirao M."/>
            <person name="Ohmori Y."/>
            <person name="Kawabata A."/>
            <person name="Hikiji T."/>
            <person name="Kobatake N."/>
            <person name="Inagaki H."/>
            <person name="Ikema Y."/>
            <person name="Okamoto S."/>
            <person name="Okitani R."/>
            <person name="Kawakami T."/>
            <person name="Noguchi S."/>
            <person name="Itoh T."/>
            <person name="Shigeta K."/>
            <person name="Senba T."/>
            <person name="Matsumura K."/>
            <person name="Nakajima Y."/>
            <person name="Mizuno T."/>
            <person name="Morinaga M."/>
            <person name="Sasaki M."/>
            <person name="Togashi T."/>
            <person name="Oyama M."/>
            <person name="Hata H."/>
            <person name="Watanabe M."/>
            <person name="Komatsu T."/>
            <person name="Mizushima-Sugano J."/>
            <person name="Satoh T."/>
            <person name="Shirai Y."/>
            <person name="Takahashi Y."/>
            <person name="Nakagawa K."/>
            <person name="Okumura K."/>
            <person name="Nagase T."/>
            <person name="Nomura N."/>
            <person name="Kikuchi H."/>
            <person name="Masuho Y."/>
            <person name="Yamashita R."/>
            <person name="Nakai K."/>
            <person name="Yada T."/>
            <person name="Nakamura Y."/>
            <person name="Ohara O."/>
            <person name="Isogai T."/>
            <person name="Sugano S."/>
        </authorList>
    </citation>
    <scope>NUCLEOTIDE SEQUENCE [LARGE SCALE MRNA]</scope>
    <scope>VARIANTS GLU-283; VAL-382 AND ARG-398</scope>
    <source>
        <tissue>Hippocampus</tissue>
        <tissue>Ovarian carcinoma</tissue>
    </source>
</reference>
<reference key="4">
    <citation type="journal article" date="2005" name="Nature">
        <title>Generation and annotation of the DNA sequences of human chromosomes 2 and 4.</title>
        <authorList>
            <person name="Hillier L.W."/>
            <person name="Graves T.A."/>
            <person name="Fulton R.S."/>
            <person name="Fulton L.A."/>
            <person name="Pepin K.H."/>
            <person name="Minx P."/>
            <person name="Wagner-McPherson C."/>
            <person name="Layman D."/>
            <person name="Wylie K."/>
            <person name="Sekhon M."/>
            <person name="Becker M.C."/>
            <person name="Fewell G.A."/>
            <person name="Delehaunty K.D."/>
            <person name="Miner T.L."/>
            <person name="Nash W.E."/>
            <person name="Kremitzki C."/>
            <person name="Oddy L."/>
            <person name="Du H."/>
            <person name="Sun H."/>
            <person name="Bradshaw-Cordum H."/>
            <person name="Ali J."/>
            <person name="Carter J."/>
            <person name="Cordes M."/>
            <person name="Harris A."/>
            <person name="Isak A."/>
            <person name="van Brunt A."/>
            <person name="Nguyen C."/>
            <person name="Du F."/>
            <person name="Courtney L."/>
            <person name="Kalicki J."/>
            <person name="Ozersky P."/>
            <person name="Abbott S."/>
            <person name="Armstrong J."/>
            <person name="Belter E.A."/>
            <person name="Caruso L."/>
            <person name="Cedroni M."/>
            <person name="Cotton M."/>
            <person name="Davidson T."/>
            <person name="Desai A."/>
            <person name="Elliott G."/>
            <person name="Erb T."/>
            <person name="Fronick C."/>
            <person name="Gaige T."/>
            <person name="Haakenson W."/>
            <person name="Haglund K."/>
            <person name="Holmes A."/>
            <person name="Harkins R."/>
            <person name="Kim K."/>
            <person name="Kruchowski S.S."/>
            <person name="Strong C.M."/>
            <person name="Grewal N."/>
            <person name="Goyea E."/>
            <person name="Hou S."/>
            <person name="Levy A."/>
            <person name="Martinka S."/>
            <person name="Mead K."/>
            <person name="McLellan M.D."/>
            <person name="Meyer R."/>
            <person name="Randall-Maher J."/>
            <person name="Tomlinson C."/>
            <person name="Dauphin-Kohlberg S."/>
            <person name="Kozlowicz-Reilly A."/>
            <person name="Shah N."/>
            <person name="Swearengen-Shahid S."/>
            <person name="Snider J."/>
            <person name="Strong J.T."/>
            <person name="Thompson J."/>
            <person name="Yoakum M."/>
            <person name="Leonard S."/>
            <person name="Pearman C."/>
            <person name="Trani L."/>
            <person name="Radionenko M."/>
            <person name="Waligorski J.E."/>
            <person name="Wang C."/>
            <person name="Rock S.M."/>
            <person name="Tin-Wollam A.-M."/>
            <person name="Maupin R."/>
            <person name="Latreille P."/>
            <person name="Wendl M.C."/>
            <person name="Yang S.-P."/>
            <person name="Pohl C."/>
            <person name="Wallis J.W."/>
            <person name="Spieth J."/>
            <person name="Bieri T.A."/>
            <person name="Berkowicz N."/>
            <person name="Nelson J.O."/>
            <person name="Osborne J."/>
            <person name="Ding L."/>
            <person name="Meyer R."/>
            <person name="Sabo A."/>
            <person name="Shotland Y."/>
            <person name="Sinha P."/>
            <person name="Wohldmann P.E."/>
            <person name="Cook L.L."/>
            <person name="Hickenbotham M.T."/>
            <person name="Eldred J."/>
            <person name="Williams D."/>
            <person name="Jones T.A."/>
            <person name="She X."/>
            <person name="Ciccarelli F.D."/>
            <person name="Izaurralde E."/>
            <person name="Taylor J."/>
            <person name="Schmutz J."/>
            <person name="Myers R.M."/>
            <person name="Cox D.R."/>
            <person name="Huang X."/>
            <person name="McPherson J.D."/>
            <person name="Mardis E.R."/>
            <person name="Clifton S.W."/>
            <person name="Warren W.C."/>
            <person name="Chinwalla A.T."/>
            <person name="Eddy S.R."/>
            <person name="Marra M.A."/>
            <person name="Ovcharenko I."/>
            <person name="Furey T.S."/>
            <person name="Miller W."/>
            <person name="Eichler E.E."/>
            <person name="Bork P."/>
            <person name="Suyama M."/>
            <person name="Torrents D."/>
            <person name="Waterston R.H."/>
            <person name="Wilson R.K."/>
        </authorList>
    </citation>
    <scope>NUCLEOTIDE SEQUENCE [LARGE SCALE GENOMIC DNA]</scope>
</reference>
<reference key="5">
    <citation type="journal article" date="2004" name="Genome Res.">
        <title>The status, quality, and expansion of the NIH full-length cDNA project: the Mammalian Gene Collection (MGC).</title>
        <authorList>
            <consortium name="The MGC Project Team"/>
        </authorList>
    </citation>
    <scope>NUCLEOTIDE SEQUENCE [LARGE SCALE MRNA] (ISOFORMS 1 AND 2)</scope>
    <scope>VARIANTS GLU-283; VAL-382 AND ARG-398</scope>
    <source>
        <tissue>Brain</tissue>
        <tissue>Uterus</tissue>
    </source>
</reference>
<reference key="6">
    <citation type="journal article" date="2007" name="Nature">
        <title>Identification of the transforming EML4-ALK fusion gene in non-small-cell lung cancer.</title>
        <authorList>
            <person name="Soda M."/>
            <person name="Choi Y.L."/>
            <person name="Enomoto M."/>
            <person name="Takada S."/>
            <person name="Yamashita Y."/>
            <person name="Ishikawa S."/>
            <person name="Fujiwara S."/>
            <person name="Watanabe H."/>
            <person name="Kurashina K."/>
            <person name="Hatanaka H."/>
            <person name="Bando M."/>
            <person name="Ohno S."/>
            <person name="Ishikawa Y."/>
            <person name="Aburatani H."/>
            <person name="Niki T."/>
            <person name="Sohara Y."/>
            <person name="Sugiyama Y."/>
            <person name="Mano H."/>
        </authorList>
    </citation>
    <scope>NUCLEOTIDE SEQUENCE [MRNA] OF 1-747</scope>
    <scope>VARIANTS GLU-283 AND VAL-382</scope>
    <scope>CHROMOSOMAL TRANSLOCATION WITH ALK</scope>
</reference>
<reference key="7">
    <citation type="journal article" date="2005" name="Nat. Biotechnol.">
        <title>Immunoaffinity profiling of tyrosine phosphorylation in cancer cells.</title>
        <authorList>
            <person name="Rush J."/>
            <person name="Moritz A."/>
            <person name="Lee K.A."/>
            <person name="Guo A."/>
            <person name="Goss V.L."/>
            <person name="Spek E.J."/>
            <person name="Zhang H."/>
            <person name="Zha X.-M."/>
            <person name="Polakiewicz R.D."/>
            <person name="Comb M.J."/>
        </authorList>
    </citation>
    <scope>PHOSPHORYLATION [LARGE SCALE ANALYSIS] AT TYR-226</scope>
    <scope>IDENTIFICATION BY MASS SPECTROMETRY [LARGE SCALE ANALYSIS]</scope>
</reference>
<reference key="8">
    <citation type="journal article" date="2006" name="Exp. Cell Res.">
        <title>Human EML4, a novel member of the EMAP family, is essential for microtubule formation.</title>
        <authorList>
            <person name="Pollmann M."/>
            <person name="Parwaresch R."/>
            <person name="Adam-Klages S."/>
            <person name="Kruse M.L."/>
            <person name="Buck F."/>
            <person name="Heidebrecht H.J."/>
        </authorList>
    </citation>
    <scope>FUNCTION</scope>
    <scope>MICROTUBULE-BINDING</scope>
    <scope>SUBCELLULAR LOCATION</scope>
    <scope>PHOSPHORYLATION</scope>
</reference>
<reference key="9">
    <citation type="journal article" date="2008" name="Proc. Natl. Acad. Sci. U.S.A.">
        <title>A quantitative atlas of mitotic phosphorylation.</title>
        <authorList>
            <person name="Dephoure N."/>
            <person name="Zhou C."/>
            <person name="Villen J."/>
            <person name="Beausoleil S.A."/>
            <person name="Bakalarski C.E."/>
            <person name="Elledge S.J."/>
            <person name="Gygi S.P."/>
        </authorList>
    </citation>
    <scope>PHOSPHORYLATION [LARGE SCALE ANALYSIS] AT SER-144; SER-146; SER-895; THR-897; THR-899 AND SER-903</scope>
    <scope>IDENTIFICATION BY MASS SPECTROMETRY [LARGE SCALE ANALYSIS]</scope>
    <source>
        <tissue>Cervix carcinoma</tissue>
    </source>
</reference>
<reference key="10">
    <citation type="journal article" date="2009" name="Anal. Chem.">
        <title>Lys-N and trypsin cover complementary parts of the phosphoproteome in a refined SCX-based approach.</title>
        <authorList>
            <person name="Gauci S."/>
            <person name="Helbig A.O."/>
            <person name="Slijper M."/>
            <person name="Krijgsveld J."/>
            <person name="Heck A.J."/>
            <person name="Mohammed S."/>
        </authorList>
    </citation>
    <scope>IDENTIFICATION BY MASS SPECTROMETRY [LARGE SCALE ANALYSIS]</scope>
</reference>
<reference key="11">
    <citation type="journal article" date="2009" name="Sci. Signal.">
        <title>Quantitative phosphoproteomic analysis of T cell receptor signaling reveals system-wide modulation of protein-protein interactions.</title>
        <authorList>
            <person name="Mayya V."/>
            <person name="Lundgren D.H."/>
            <person name="Hwang S.-I."/>
            <person name="Rezaul K."/>
            <person name="Wu L."/>
            <person name="Eng J.K."/>
            <person name="Rodionov V."/>
            <person name="Han D.K."/>
        </authorList>
    </citation>
    <scope>PHOSPHORYLATION [LARGE SCALE ANALYSIS] AT THR-897 AND THR-899</scope>
    <scope>IDENTIFICATION BY MASS SPECTROMETRY [LARGE SCALE ANALYSIS]</scope>
    <source>
        <tissue>Leukemic T-cell</tissue>
    </source>
</reference>
<reference key="12">
    <citation type="journal article" date="2010" name="Sci. Signal.">
        <title>Quantitative phosphoproteomics reveals widespread full phosphorylation site occupancy during mitosis.</title>
        <authorList>
            <person name="Olsen J.V."/>
            <person name="Vermeulen M."/>
            <person name="Santamaria A."/>
            <person name="Kumar C."/>
            <person name="Miller M.L."/>
            <person name="Jensen L.J."/>
            <person name="Gnad F."/>
            <person name="Cox J."/>
            <person name="Jensen T.S."/>
            <person name="Nigg E.A."/>
            <person name="Brunak S."/>
            <person name="Mann M."/>
        </authorList>
    </citation>
    <scope>ACETYLATION [LARGE SCALE ANALYSIS] AT MET-1</scope>
    <scope>PHOSPHORYLATION [LARGE SCALE ANALYSIS] AT SER-7; SER-13; SER-16; SER-61; SER-144; THR-899 AND SER-978</scope>
    <scope>IDENTIFICATION BY MASS SPECTROMETRY [LARGE SCALE ANALYSIS]</scope>
    <source>
        <tissue>Cervix carcinoma</tissue>
    </source>
</reference>
<reference key="13">
    <citation type="journal article" date="2011" name="BMC Syst. Biol.">
        <title>Initial characterization of the human central proteome.</title>
        <authorList>
            <person name="Burkard T.R."/>
            <person name="Planyavsky M."/>
            <person name="Kaupe I."/>
            <person name="Breitwieser F.P."/>
            <person name="Buerckstuemmer T."/>
            <person name="Bennett K.L."/>
            <person name="Superti-Furga G."/>
            <person name="Colinge J."/>
        </authorList>
    </citation>
    <scope>IDENTIFICATION BY MASS SPECTROMETRY [LARGE SCALE ANALYSIS]</scope>
</reference>
<reference key="14">
    <citation type="journal article" date="2011" name="Sci. Signal.">
        <title>System-wide temporal characterization of the proteome and phosphoproteome of human embryonic stem cell differentiation.</title>
        <authorList>
            <person name="Rigbolt K.T."/>
            <person name="Prokhorova T.A."/>
            <person name="Akimov V."/>
            <person name="Henningsen J."/>
            <person name="Johansen P.T."/>
            <person name="Kratchmarova I."/>
            <person name="Kassem M."/>
            <person name="Mann M."/>
            <person name="Olsen J.V."/>
            <person name="Blagoev B."/>
        </authorList>
    </citation>
    <scope>PHOSPHORYLATION [LARGE SCALE ANALYSIS] AT SER-144; SER-146 AND SER-978</scope>
    <scope>IDENTIFICATION BY MASS SPECTROMETRY [LARGE SCALE ANALYSIS]</scope>
</reference>
<reference key="15">
    <citation type="journal article" date="2012" name="Proc. Natl. Acad. Sci. U.S.A.">
        <title>N-terminal acetylome analyses and functional insights of the N-terminal acetyltransferase NatB.</title>
        <authorList>
            <person name="Van Damme P."/>
            <person name="Lasa M."/>
            <person name="Polevoda B."/>
            <person name="Gazquez C."/>
            <person name="Elosegui-Artola A."/>
            <person name="Kim D.S."/>
            <person name="De Juan-Pardo E."/>
            <person name="Demeyer K."/>
            <person name="Hole K."/>
            <person name="Larrea E."/>
            <person name="Timmerman E."/>
            <person name="Prieto J."/>
            <person name="Arnesen T."/>
            <person name="Sherman F."/>
            <person name="Gevaert K."/>
            <person name="Aldabe R."/>
        </authorList>
    </citation>
    <scope>ACETYLATION [LARGE SCALE ANALYSIS] AT MET-1</scope>
    <scope>IDENTIFICATION BY MASS SPECTROMETRY [LARGE SCALE ANALYSIS]</scope>
</reference>
<reference key="16">
    <citation type="journal article" date="2013" name="J. Proteome Res.">
        <title>Toward a comprehensive characterization of a human cancer cell phosphoproteome.</title>
        <authorList>
            <person name="Zhou H."/>
            <person name="Di Palma S."/>
            <person name="Preisinger C."/>
            <person name="Peng M."/>
            <person name="Polat A.N."/>
            <person name="Heck A.J."/>
            <person name="Mohammed S."/>
        </authorList>
    </citation>
    <scope>PHOSPHORYLATION [LARGE SCALE ANALYSIS] AT SER-61; SER-144; SER-146; SER-171; SER-200; THR-201; THR-897 AND THR-899</scope>
    <scope>IDENTIFICATION BY MASS SPECTROMETRY [LARGE SCALE ANALYSIS]</scope>
    <source>
        <tissue>Cervix carcinoma</tissue>
        <tissue>Erythroleukemia</tissue>
    </source>
</reference>
<reference key="17">
    <citation type="journal article" date="2014" name="J. Proteomics">
        <title>An enzyme assisted RP-RPLC approach for in-depth analysis of human liver phosphoproteome.</title>
        <authorList>
            <person name="Bian Y."/>
            <person name="Song C."/>
            <person name="Cheng K."/>
            <person name="Dong M."/>
            <person name="Wang F."/>
            <person name="Huang J."/>
            <person name="Sun D."/>
            <person name="Wang L."/>
            <person name="Ye M."/>
            <person name="Zou H."/>
        </authorList>
    </citation>
    <scope>PHOSPHORYLATION [LARGE SCALE ANALYSIS] AT THR-96; THR-237; SER-891 AND THR-899</scope>
    <scope>IDENTIFICATION BY MASS SPECTROMETRY [LARGE SCALE ANALYSIS]</scope>
    <source>
        <tissue>Liver</tissue>
    </source>
</reference>
<reference key="18">
    <citation type="journal article" date="2015" name="Cell Cycle">
        <title>EML4 promotes the loading of NUDC to the spindle for mitotic progression.</title>
        <authorList>
            <person name="Chen D."/>
            <person name="Ito S."/>
            <person name="Yuan H."/>
            <person name="Hyodo T."/>
            <person name="Kadomatsu K."/>
            <person name="Hamaguchi M."/>
            <person name="Senga T."/>
        </authorList>
    </citation>
    <scope>FUNCTION</scope>
    <scope>SUBCELLULAR LOCATION</scope>
    <scope>INTERACTION WITH NUDC</scope>
</reference>
<reference key="19">
    <citation type="journal article" date="2019" name="Sci. Signal.">
        <title>Mitotic phosphorylation by NEK6 and NEK7 reduces the microtubule affinity of EML4 to promote chromosome congression.</title>
        <authorList>
            <person name="Adib R."/>
            <person name="Montgomery J.M."/>
            <person name="Atherton J."/>
            <person name="O'Regan L."/>
            <person name="Richards M.W."/>
            <person name="Straatman K.R."/>
            <person name="Roth D."/>
            <person name="Straube A."/>
            <person name="Bayliss R."/>
            <person name="Moores C.A."/>
            <person name="Fry A.M."/>
        </authorList>
    </citation>
    <scope>FUNCTION</scope>
    <scope>SUBCELLULAR LOCATION</scope>
    <scope>TUBULIN-BINDING</scope>
    <scope>PHOSPHORYLATION AT SER-134; SER-144; SER-146; THR-490; THR-609 AND SER-981</scope>
    <scope>MUTAGENESIS OF SER-144 AND SER-146</scope>
</reference>
<reference evidence="12" key="20">
    <citation type="journal article" date="2015" name="Biochem. J.">
        <title>Microtubule association of EML proteins and the EML4-ALK variant 3 oncoprotein require an N-terminal trimerization domain.</title>
        <authorList>
            <person name="Richards M.W."/>
            <person name="O'Regan L."/>
            <person name="Roth D."/>
            <person name="Montgomery J.M."/>
            <person name="Straube A."/>
            <person name="Fry A.M."/>
            <person name="Bayliss R."/>
        </authorList>
    </citation>
    <scope>X-RAY CRYSTALLOGRAPHY (2.90 ANGSTROMS) OF 6-64 OF MUTANT MET-38</scope>
    <scope>SUBUNIT</scope>
    <scope>COILED COIL</scope>
</reference>
<protein>
    <recommendedName>
        <fullName>Echinoderm microtubule-associated protein-like 4</fullName>
        <shortName>EMAP-4</shortName>
    </recommendedName>
    <alternativeName>
        <fullName>Restrictedly overexpressed proliferation-associated protein</fullName>
    </alternativeName>
    <alternativeName>
        <fullName>Ropp 120</fullName>
    </alternativeName>
</protein>
<feature type="chain" id="PRO_0000050963" description="Echinoderm microtubule-associated protein-like 4">
    <location>
        <begin position="1"/>
        <end position="981"/>
    </location>
</feature>
<feature type="repeat" description="WD 1">
    <location>
        <begin position="259"/>
        <end position="297"/>
    </location>
</feature>
<feature type="repeat" description="WD 2">
    <location>
        <begin position="301"/>
        <end position="348"/>
    </location>
</feature>
<feature type="repeat" description="WD 3">
    <location>
        <begin position="356"/>
        <end position="396"/>
    </location>
</feature>
<feature type="repeat" description="WD 4">
    <location>
        <begin position="403"/>
        <end position="438"/>
    </location>
</feature>
<feature type="repeat" description="WD 5">
    <location>
        <begin position="445"/>
        <end position="484"/>
    </location>
</feature>
<feature type="repeat" description="WD 6">
    <location>
        <begin position="500"/>
        <end position="538"/>
    </location>
</feature>
<feature type="repeat" description="WD 7">
    <location>
        <begin position="543"/>
        <end position="579"/>
    </location>
</feature>
<feature type="repeat" description="WD 8">
    <location>
        <begin position="582"/>
        <end position="621"/>
    </location>
</feature>
<feature type="repeat" description="WD 9">
    <location>
        <begin position="625"/>
        <end position="662"/>
    </location>
</feature>
<feature type="repeat" description="WD 10">
    <location>
        <begin position="668"/>
        <end position="704"/>
    </location>
</feature>
<feature type="repeat" description="WD 11">
    <location>
        <begin position="711"/>
        <end position="750"/>
    </location>
</feature>
<feature type="repeat" description="WD 12">
    <location>
        <begin position="760"/>
        <end position="818"/>
    </location>
</feature>
<feature type="repeat" description="WD 13">
    <location>
        <begin position="825"/>
        <end position="864"/>
    </location>
</feature>
<feature type="region of interest" description="Microtubule-binding" evidence="5 9">
    <location>
        <begin position="1"/>
        <end position="249"/>
    </location>
</feature>
<feature type="region of interest" description="Disordered" evidence="1">
    <location>
        <begin position="1"/>
        <end position="20"/>
    </location>
</feature>
<feature type="region of interest" description="Disordered" evidence="1">
    <location>
        <begin position="57"/>
        <end position="205"/>
    </location>
</feature>
<feature type="region of interest" description="Disordered" evidence="1">
    <location>
        <begin position="881"/>
        <end position="981"/>
    </location>
</feature>
<feature type="coiled-coil region" evidence="7">
    <location>
        <begin position="14"/>
        <end position="63"/>
    </location>
</feature>
<feature type="compositionally biased region" description="Basic and acidic residues" evidence="1">
    <location>
        <begin position="114"/>
        <end position="134"/>
    </location>
</feature>
<feature type="compositionally biased region" description="Low complexity" evidence="1">
    <location>
        <begin position="137"/>
        <end position="155"/>
    </location>
</feature>
<feature type="compositionally biased region" description="Basic and acidic residues" evidence="1">
    <location>
        <begin position="176"/>
        <end position="193"/>
    </location>
</feature>
<feature type="compositionally biased region" description="Polar residues" evidence="1">
    <location>
        <begin position="881"/>
        <end position="893"/>
    </location>
</feature>
<feature type="compositionally biased region" description="Polar residues" evidence="1">
    <location>
        <begin position="916"/>
        <end position="931"/>
    </location>
</feature>
<feature type="compositionally biased region" description="Acidic residues" evidence="1">
    <location>
        <begin position="937"/>
        <end position="946"/>
    </location>
</feature>
<feature type="site" description="Breakpoint for translocation to form the EML4-ALK fusion protein (variant 1)" evidence="6">
    <location>
        <begin position="496"/>
        <end position="497"/>
    </location>
</feature>
<feature type="site" description="Breakpoint for translocation to form the EML4-ALK fusion protein (variant 2)" evidence="6">
    <location>
        <begin position="747"/>
        <end position="748"/>
    </location>
</feature>
<feature type="modified residue" description="N-acetylmethionine" evidence="16 18">
    <location>
        <position position="1"/>
    </location>
</feature>
<feature type="modified residue" description="Phosphoserine" evidence="16">
    <location>
        <position position="7"/>
    </location>
</feature>
<feature type="modified residue" description="Phosphoserine" evidence="16">
    <location>
        <position position="13"/>
    </location>
</feature>
<feature type="modified residue" description="Phosphoserine" evidence="16">
    <location>
        <position position="16"/>
    </location>
</feature>
<feature type="modified residue" description="Phosphoserine" evidence="16 19">
    <location>
        <position position="61"/>
    </location>
</feature>
<feature type="modified residue" description="Phosphothreonine" evidence="20">
    <location>
        <position position="96"/>
    </location>
</feature>
<feature type="modified residue" description="Phosphoserine; by NEK7" evidence="9">
    <location>
        <position position="134"/>
    </location>
</feature>
<feature type="modified residue" description="Phosphoserine; by NEK6" evidence="9 14 16 17 19">
    <location>
        <position position="144"/>
    </location>
</feature>
<feature type="modified residue" description="Phosphoserine; by NEK7" evidence="9 14 17 19">
    <location>
        <position position="146"/>
    </location>
</feature>
<feature type="modified residue" description="Phosphoserine" evidence="19">
    <location>
        <position position="171"/>
    </location>
</feature>
<feature type="modified residue" description="Phosphoserine" evidence="19">
    <location>
        <position position="200"/>
    </location>
</feature>
<feature type="modified residue" description="Phosphothreonine" evidence="19">
    <location>
        <position position="201"/>
    </location>
</feature>
<feature type="modified residue" description="Phosphotyrosine" evidence="13">
    <location>
        <position position="226"/>
    </location>
</feature>
<feature type="modified residue" description="Phosphothreonine" evidence="20">
    <location>
        <position position="237"/>
    </location>
</feature>
<feature type="modified residue" description="Phosphothreonine; by NEK6" evidence="9">
    <location>
        <position position="490"/>
    </location>
</feature>
<feature type="modified residue" description="Phosphothreonine; by NEK6 and NEK7" evidence="9">
    <location>
        <position position="609"/>
    </location>
</feature>
<feature type="modified residue" description="Phosphoserine" evidence="20">
    <location>
        <position position="891"/>
    </location>
</feature>
<feature type="modified residue" description="Phosphoserine" evidence="14">
    <location>
        <position position="895"/>
    </location>
</feature>
<feature type="modified residue" description="Phosphothreonine" evidence="14 15 19">
    <location>
        <position position="897"/>
    </location>
</feature>
<feature type="modified residue" description="Phosphothreonine" evidence="14 15 16 19 20">
    <location>
        <position position="899"/>
    </location>
</feature>
<feature type="modified residue" description="Phosphoserine" evidence="14">
    <location>
        <position position="903"/>
    </location>
</feature>
<feature type="modified residue" description="Phosphoserine" evidence="16 17">
    <location>
        <position position="978"/>
    </location>
</feature>
<feature type="modified residue" description="Phosphoserine; by NEK6 and NEK7" evidence="9">
    <location>
        <position position="981"/>
    </location>
</feature>
<feature type="splice variant" id="VSP_047192" description="In isoform 2." evidence="10">
    <location>
        <begin position="112"/>
        <end position="169"/>
    </location>
</feature>
<feature type="sequence variant" id="VAR_031726" description="In dbSNP:rs6736913." evidence="2 3 4 6">
    <original>K</original>
    <variation>E</variation>
    <location>
        <position position="283"/>
    </location>
</feature>
<feature type="sequence variant" id="VAR_031727" description="In dbSNP:rs10202624." evidence="2 3 4 6">
    <original>I</original>
    <variation>V</variation>
    <location>
        <position position="382"/>
    </location>
</feature>
<feature type="sequence variant" id="VAR_031728" description="In dbSNP:rs28651764." evidence="3 4">
    <original>K</original>
    <variation>R</variation>
    <location>
        <position position="398"/>
    </location>
</feature>
<feature type="sequence variant" id="VAR_031729" description="In dbSNP:rs28364731.">
    <original>S</original>
    <variation>L</variation>
    <location>
        <position position="978"/>
    </location>
</feature>
<feature type="mutagenesis site" description="Phosphorylation-deficient mutant which shows increased localization to microtubules during mitosis, increased microtubule stability and impaired chromosome congression; when associated with A-146." evidence="9">
    <original>S</original>
    <variation>A</variation>
    <location>
        <position position="144"/>
    </location>
</feature>
<feature type="mutagenesis site" description="Phosphomimetic mutant which shows reduced localization to microtubules during interphase; when associated with D-146." evidence="9">
    <original>S</original>
    <variation>D</variation>
    <location>
        <position position="144"/>
    </location>
</feature>
<feature type="mutagenesis site" description="Phosphorylation-deficient mutant which shows increased localization to microtubules during mitosis, increased microtubule stability and impaired chromosome congression; when associated with A-144." evidence="9">
    <original>S</original>
    <variation>A</variation>
    <location>
        <position position="146"/>
    </location>
</feature>
<feature type="mutagenesis site" description="Phosphomimetic mutant which shows reduced localization to microtubules during interphase; when associated with D-144." evidence="9">
    <original>S</original>
    <variation>D</variation>
    <location>
        <position position="146"/>
    </location>
</feature>
<feature type="sequence conflict" description="In Ref. 4; AAY15086." evidence="11" ref="4">
    <original>WTTYTC</original>
    <variation>SSRPCW</variation>
    <location>
        <begin position="768"/>
        <end position="773"/>
    </location>
</feature>
<feature type="helix" evidence="21">
    <location>
        <begin position="18"/>
        <end position="43"/>
    </location>
</feature>
<sequence>MDGFAGSLDDSISAASTSDVQDRLSALESRVQQQEDEITVLKAALADVLRRLAISEDHVASVKKSVSSKGQPSPRAVIPMSCITNGSGANRKPSHTSAVSIAGKETLSSAAKSGTEKKKEKPQGQREKKEESHSNDQSPQIRASPSPQPSSQPLQIHRQTPESKNATPTKSIKRPSPAEKSHNSWENSDDSRNKLSKIPSTPKLIPKVTKTADKHKDVIINQEGEYIKMFMRGRPITMFIPSDVDNYDDIRTELPPEKLKLEWAYGYRGKDCRANVYLLPTGKIVYFIASVVVLFNYEERTQRHYLGHTDCVKCLAIHPDKIRIATGQIAGVDKDGRPLQPHVRVWDSVTLSTLQIIGLGTFERGVGCLDFSKADSGVHLCIIDDSNEHMLTVWDWQKKAKGAEIKTTNEVVLAVEFHPTDANTIITCGKSHIFFWTWSGNSLTRKQGIFGKYEKPKFVQCLAFLGNGDVLTGDSGGVMLIWSKTTVEPTPGKGPKGVYQISKQIKAHDGSVFTLCQMRNGMLLTGGGKDRKIILWDHDLNPEREIEVPDQYGTIRAVAEGKADQFLVGTSRNFILRGTFNDGFQIEVQGHTDELWGLATHPFKDLLLTCAQDRQVCLWNSMEHRLEWTRLVDEPGHCADFHPSGTVVAIGTHSGRWFVLDAETRDLVSIHTDGNEQLSVMRYSIDGTFLAVGSHDNFIYLYVVSENGRKYSRYGRCTGHSSYITHLDWSPDNKYIMSNSGDYEILYWDIPNGCKLIRNRSDCKDIDWTTYTCVLGFQVFGVWPEGSDGTDINALVRSHNRKVIAVADDFCKVHLFQYPCSKAKAPSHKYSAHSSHVTNVSFTHNDSHLISTGGKDMSIIQWKLVEKLSLPQNETVADTTLTKAPVSSTESVIQSNTPTPPPSQPLNETAEEESRISSSPTLLENSLEQTVEPSEDHSEEESEEGSGDLGEPLYEEPCNEISKEQAKATLLEDQQDPSPSS</sequence>
<comment type="function">
    <text evidence="5 8 9">Essential for the formation and stability of microtubules (MTs) (PubMed:16890222, PubMed:31409757). Required for the organization of the mitotic spindle and for the proper attachment of kinetochores to MTs (PubMed:25789526). Promotes the recruitment of NUDC to the mitotic spindle for mitotic progression (PubMed:25789526).</text>
</comment>
<comment type="subunit">
    <text evidence="7 8 9">Homotrimer; self-association is mediated by the N-terminal coiled coil (PubMed:25740311). Interacts (via WD repeats) with NUDC (PubMed:25789526). Interacts with alpha- and beta-tubulin during mitosis (PubMed:31409757).</text>
</comment>
<comment type="subcellular location">
    <subcellularLocation>
        <location evidence="5 9 11">Cytoplasm</location>
        <location evidence="5 9 11">Cytoskeleton</location>
    </subcellularLocation>
    <subcellularLocation>
        <location evidence="5">Cytoplasm</location>
    </subcellularLocation>
    <subcellularLocation>
        <location evidence="5 8">Cytoplasm</location>
        <location evidence="5 8">Cytoskeleton</location>
        <location evidence="5 8">Spindle</location>
    </subcellularLocation>
    <subcellularLocation>
        <location evidence="5 8">Cytoplasm</location>
        <location evidence="5 8">Cytoskeleton</location>
        <location evidence="5 8">Microtubule organizing center</location>
    </subcellularLocation>
    <subcellularLocation>
        <location evidence="8">Midbody</location>
    </subcellularLocation>
    <text evidence="9">Localizes to microtubules (MTs) during interphase with a significantly reduced affinity for MTs during mitosis.</text>
</comment>
<comment type="alternative products">
    <event type="alternative splicing"/>
    <isoform>
        <id>Q9HC35-1</id>
        <name>1</name>
        <sequence type="displayed"/>
    </isoform>
    <isoform>
        <id>Q9HC35-2</id>
        <name>2</name>
        <sequence type="described" ref="VSP_047192"/>
    </isoform>
</comment>
<comment type="PTM">
    <text evidence="5 9">Phosphorylated during mitosis (PubMed:16890222). Phosphorylation at Ser-144 and Ser-146 promotes its dissociation from microtubules during mitosis which is required for efficient chromosome congression (PubMed:31409757).</text>
</comment>
<comment type="disease">
    <text evidence="6">A chromosomal aberration involving EML4 has been identified in a subset of patients with non-small-cell lung carcinoma. This aberration leads to the production of a fusion protein between the N-terminus of EML4 and the C-terminus of ALK. It is unclear whether the fusion protein is caused by a simple inversion within 2p (inv(2)(p21p23)) or whether the chromosome translocation involving 2p is more complex. When tested in a heterologous system, the fusion protein EML4-ALK possesses transforming activity that is dependent on ALK catalytic activity, possibly due to spontaneous dimerization mediated by the EML4 moiety, leading to ALK kinase activation.</text>
</comment>
<comment type="similarity">
    <text evidence="11">Belongs to the WD repeat EMAP family.</text>
</comment>
<comment type="sequence caution" evidence="11">
    <conflict type="miscellaneous discrepancy">
        <sequence resource="EMBL-CDS" id="AAI04648"/>
    </conflict>
    <text>Contaminating sequence. Potential poly-A sequence.</text>
</comment>
<comment type="sequence caution" evidence="11">
    <conflict type="erroneous initiation">
        <sequence resource="EMBL-CDS" id="BAA91919"/>
    </conflict>
    <text>Truncated N-terminus.</text>
</comment>
<comment type="online information" name="Atlas of Genetics and Cytogenetics in Oncology and Haematology">
    <link uri="https://atlasgeneticsoncology.org/gene/44353/EML4"/>
</comment>
<gene>
    <name type="primary">EML4</name>
    <name type="synonym">C2orf2</name>
    <name type="synonym">EMAPL4</name>
</gene>
<organism>
    <name type="scientific">Homo sapiens</name>
    <name type="common">Human</name>
    <dbReference type="NCBI Taxonomy" id="9606"/>
    <lineage>
        <taxon>Eukaryota</taxon>
        <taxon>Metazoa</taxon>
        <taxon>Chordata</taxon>
        <taxon>Craniata</taxon>
        <taxon>Vertebrata</taxon>
        <taxon>Euteleostomi</taxon>
        <taxon>Mammalia</taxon>
        <taxon>Eutheria</taxon>
        <taxon>Euarchontoglires</taxon>
        <taxon>Primates</taxon>
        <taxon>Haplorrhini</taxon>
        <taxon>Catarrhini</taxon>
        <taxon>Hominidae</taxon>
        <taxon>Homo</taxon>
    </lineage>
</organism>
<evidence type="ECO:0000256" key="1">
    <source>
        <dbReference type="SAM" id="MobiDB-lite"/>
    </source>
</evidence>
<evidence type="ECO:0000269" key="2">
    <source>
    </source>
</evidence>
<evidence type="ECO:0000269" key="3">
    <source>
    </source>
</evidence>
<evidence type="ECO:0000269" key="4">
    <source>
    </source>
</evidence>
<evidence type="ECO:0000269" key="5">
    <source>
    </source>
</evidence>
<evidence type="ECO:0000269" key="6">
    <source>
    </source>
</evidence>
<evidence type="ECO:0000269" key="7">
    <source>
    </source>
</evidence>
<evidence type="ECO:0000269" key="8">
    <source>
    </source>
</evidence>
<evidence type="ECO:0000269" key="9">
    <source>
    </source>
</evidence>
<evidence type="ECO:0000303" key="10">
    <source>
    </source>
</evidence>
<evidence type="ECO:0000305" key="11"/>
<evidence type="ECO:0007744" key="12">
    <source>
        <dbReference type="PDB" id="4CGC"/>
    </source>
</evidence>
<evidence type="ECO:0007744" key="13">
    <source>
    </source>
</evidence>
<evidence type="ECO:0007744" key="14">
    <source>
    </source>
</evidence>
<evidence type="ECO:0007744" key="15">
    <source>
    </source>
</evidence>
<evidence type="ECO:0007744" key="16">
    <source>
    </source>
</evidence>
<evidence type="ECO:0007744" key="17">
    <source>
    </source>
</evidence>
<evidence type="ECO:0007744" key="18">
    <source>
    </source>
</evidence>
<evidence type="ECO:0007744" key="19">
    <source>
    </source>
</evidence>
<evidence type="ECO:0007744" key="20">
    <source>
    </source>
</evidence>
<evidence type="ECO:0007829" key="21">
    <source>
        <dbReference type="PDB" id="4CGC"/>
    </source>
</evidence>
<proteinExistence type="evidence at protein level"/>
<dbReference type="EMBL" id="AF177377">
    <property type="protein sequence ID" value="AAG09279.2"/>
    <property type="molecule type" value="mRNA"/>
</dbReference>
<dbReference type="EMBL" id="AK001804">
    <property type="protein sequence ID" value="BAA91919.1"/>
    <property type="status" value="ALT_INIT"/>
    <property type="molecule type" value="mRNA"/>
</dbReference>
<dbReference type="EMBL" id="AK314702">
    <property type="protein sequence ID" value="BAG37250.1"/>
    <property type="molecule type" value="mRNA"/>
</dbReference>
<dbReference type="EMBL" id="AC006038">
    <property type="protein sequence ID" value="AAY15086.1"/>
    <property type="molecule type" value="Genomic_DNA"/>
</dbReference>
<dbReference type="EMBL" id="AC083949">
    <property type="status" value="NOT_ANNOTATED_CDS"/>
    <property type="molecule type" value="Genomic_DNA"/>
</dbReference>
<dbReference type="EMBL" id="AC096668">
    <property type="protein sequence ID" value="AAY14895.1"/>
    <property type="molecule type" value="Genomic_DNA"/>
</dbReference>
<dbReference type="EMBL" id="BC023522">
    <property type="protein sequence ID" value="AAH23522.1"/>
    <property type="molecule type" value="mRNA"/>
</dbReference>
<dbReference type="EMBL" id="BC104647">
    <property type="protein sequence ID" value="AAI04648.1"/>
    <property type="status" value="ALT_SEQ"/>
    <property type="molecule type" value="mRNA"/>
</dbReference>
<dbReference type="EMBL" id="BC140845">
    <property type="protein sequence ID" value="AAI40846.1"/>
    <property type="molecule type" value="mRNA"/>
</dbReference>
<dbReference type="EMBL" id="BC146799">
    <property type="protein sequence ID" value="AAI46800.1"/>
    <property type="molecule type" value="mRNA"/>
</dbReference>
<dbReference type="EMBL" id="AB274722">
    <property type="protein sequence ID" value="BAF73611.1"/>
    <property type="molecule type" value="mRNA"/>
</dbReference>
<dbReference type="EMBL" id="AB275889">
    <property type="protein sequence ID" value="BAF73612.1"/>
    <property type="molecule type" value="mRNA"/>
</dbReference>
<dbReference type="CCDS" id="CCDS1807.1">
    <molecule id="Q9HC35-1"/>
</dbReference>
<dbReference type="CCDS" id="CCDS46266.1">
    <molecule id="Q9HC35-2"/>
</dbReference>
<dbReference type="RefSeq" id="NP_001138548.2">
    <molecule id="Q9HC35-2"/>
    <property type="nucleotide sequence ID" value="NM_001145076.3"/>
</dbReference>
<dbReference type="RefSeq" id="NP_061936.2">
    <molecule id="Q9HC35-1"/>
    <property type="nucleotide sequence ID" value="NM_019063.4"/>
</dbReference>
<dbReference type="PDB" id="4CGC">
    <property type="method" value="X-ray"/>
    <property type="resolution" value="2.90 A"/>
    <property type="chains" value="A/B/C=6-64"/>
</dbReference>
<dbReference type="PDBsum" id="4CGC"/>
<dbReference type="SMR" id="Q9HC35"/>
<dbReference type="BioGRID" id="118169">
    <property type="interactions" value="163"/>
</dbReference>
<dbReference type="FunCoup" id="Q9HC35">
    <property type="interactions" value="1004"/>
</dbReference>
<dbReference type="IntAct" id="Q9HC35">
    <property type="interactions" value="50"/>
</dbReference>
<dbReference type="MINT" id="Q9HC35"/>
<dbReference type="STRING" id="9606.ENSP00000320663"/>
<dbReference type="BindingDB" id="Q9HC35"/>
<dbReference type="GlyCosmos" id="Q9HC35">
    <property type="glycosylation" value="1 site, 1 glycan"/>
</dbReference>
<dbReference type="GlyGen" id="Q9HC35">
    <property type="glycosylation" value="4 sites, 1 O-linked glycan (2 sites)"/>
</dbReference>
<dbReference type="iPTMnet" id="Q9HC35"/>
<dbReference type="PhosphoSitePlus" id="Q9HC35"/>
<dbReference type="BioMuta" id="EML4"/>
<dbReference type="DMDM" id="296439364"/>
<dbReference type="jPOST" id="Q9HC35"/>
<dbReference type="MassIVE" id="Q9HC35"/>
<dbReference type="PaxDb" id="9606-ENSP00000320663"/>
<dbReference type="PeptideAtlas" id="Q9HC35"/>
<dbReference type="ProteomicsDB" id="6116"/>
<dbReference type="ProteomicsDB" id="81631">
    <molecule id="Q9HC35-1"/>
</dbReference>
<dbReference type="Antibodypedia" id="29721">
    <property type="antibodies" value="150 antibodies from 27 providers"/>
</dbReference>
<dbReference type="DNASU" id="27436"/>
<dbReference type="Ensembl" id="ENST00000318522.10">
    <molecule id="Q9HC35-1"/>
    <property type="protein sequence ID" value="ENSP00000320663.5"/>
    <property type="gene ID" value="ENSG00000143924.19"/>
</dbReference>
<dbReference type="Ensembl" id="ENST00000402711.6">
    <molecule id="Q9HC35-2"/>
    <property type="protein sequence ID" value="ENSP00000385059.2"/>
    <property type="gene ID" value="ENSG00000143924.19"/>
</dbReference>
<dbReference type="GeneID" id="27436"/>
<dbReference type="KEGG" id="hsa:27436"/>
<dbReference type="MANE-Select" id="ENST00000318522.10">
    <property type="protein sequence ID" value="ENSP00000320663.5"/>
    <property type="RefSeq nucleotide sequence ID" value="NM_019063.5"/>
    <property type="RefSeq protein sequence ID" value="NP_061936.3"/>
</dbReference>
<dbReference type="UCSC" id="uc002rsi.3">
    <molecule id="Q9HC35-1"/>
    <property type="organism name" value="human"/>
</dbReference>
<dbReference type="AGR" id="HGNC:1316"/>
<dbReference type="CTD" id="27436"/>
<dbReference type="DisGeNET" id="27436"/>
<dbReference type="GeneCards" id="EML4"/>
<dbReference type="HGNC" id="HGNC:1316">
    <property type="gene designation" value="EML4"/>
</dbReference>
<dbReference type="HPA" id="ENSG00000143924">
    <property type="expression patterns" value="Low tissue specificity"/>
</dbReference>
<dbReference type="MalaCards" id="EML4"/>
<dbReference type="MIM" id="607442">
    <property type="type" value="gene"/>
</dbReference>
<dbReference type="neXtProt" id="NX_Q9HC35"/>
<dbReference type="OpenTargets" id="ENSG00000143924"/>
<dbReference type="PharmGKB" id="PA27769"/>
<dbReference type="VEuPathDB" id="HostDB:ENSG00000143924"/>
<dbReference type="eggNOG" id="KOG2106">
    <property type="taxonomic scope" value="Eukaryota"/>
</dbReference>
<dbReference type="GeneTree" id="ENSGT00940000158434"/>
<dbReference type="HOGENOM" id="CLU_011754_0_1_1"/>
<dbReference type="InParanoid" id="Q9HC35"/>
<dbReference type="OMA" id="FTYNDSH"/>
<dbReference type="OrthoDB" id="47802at2759"/>
<dbReference type="PAN-GO" id="Q9HC35">
    <property type="GO annotations" value="2 GO annotations based on evolutionary models"/>
</dbReference>
<dbReference type="PhylomeDB" id="Q9HC35"/>
<dbReference type="TreeFam" id="TF317832"/>
<dbReference type="PathwayCommons" id="Q9HC35"/>
<dbReference type="Reactome" id="R-HSA-9648025">
    <property type="pathway name" value="EML4 and NUDC in mitotic spindle formation"/>
</dbReference>
<dbReference type="Reactome" id="R-HSA-9700645">
    <property type="pathway name" value="ALK mutants bind TKIs"/>
</dbReference>
<dbReference type="Reactome" id="R-HSA-9725370">
    <property type="pathway name" value="Signaling by ALK fusions and activated point mutants"/>
</dbReference>
<dbReference type="SignaLink" id="Q9HC35"/>
<dbReference type="SIGNOR" id="Q9HC35"/>
<dbReference type="BioGRID-ORCS" id="27436">
    <property type="hits" value="22 hits in 1175 CRISPR screens"/>
</dbReference>
<dbReference type="ChiTaRS" id="EML4">
    <property type="organism name" value="human"/>
</dbReference>
<dbReference type="EvolutionaryTrace" id="Q9HC35"/>
<dbReference type="GeneWiki" id="EML4"/>
<dbReference type="GenomeRNAi" id="27436"/>
<dbReference type="Pharos" id="Q9HC35">
    <property type="development level" value="Tbio"/>
</dbReference>
<dbReference type="PRO" id="PR:Q9HC35"/>
<dbReference type="Proteomes" id="UP000005640">
    <property type="component" value="Chromosome 2"/>
</dbReference>
<dbReference type="RNAct" id="Q9HC35">
    <property type="molecule type" value="protein"/>
</dbReference>
<dbReference type="Bgee" id="ENSG00000143924">
    <property type="expression patterns" value="Expressed in tibia and 182 other cell types or tissues"/>
</dbReference>
<dbReference type="ExpressionAtlas" id="Q9HC35">
    <property type="expression patterns" value="baseline and differential"/>
</dbReference>
<dbReference type="GO" id="GO:0005929">
    <property type="term" value="C:cilium"/>
    <property type="evidence" value="ECO:0000314"/>
    <property type="project" value="HPA"/>
</dbReference>
<dbReference type="GO" id="GO:0005737">
    <property type="term" value="C:cytoplasm"/>
    <property type="evidence" value="ECO:0000314"/>
    <property type="project" value="UniProtKB"/>
</dbReference>
<dbReference type="GO" id="GO:0005829">
    <property type="term" value="C:cytosol"/>
    <property type="evidence" value="ECO:0000314"/>
    <property type="project" value="HPA"/>
</dbReference>
<dbReference type="GO" id="GO:0045171">
    <property type="term" value="C:intercellular bridge"/>
    <property type="evidence" value="ECO:0000314"/>
    <property type="project" value="HPA"/>
</dbReference>
<dbReference type="GO" id="GO:0016020">
    <property type="term" value="C:membrane"/>
    <property type="evidence" value="ECO:0007005"/>
    <property type="project" value="UniProtKB"/>
</dbReference>
<dbReference type="GO" id="GO:0005874">
    <property type="term" value="C:microtubule"/>
    <property type="evidence" value="ECO:0000314"/>
    <property type="project" value="UniProtKB"/>
</dbReference>
<dbReference type="GO" id="GO:0015630">
    <property type="term" value="C:microtubule cytoskeleton"/>
    <property type="evidence" value="ECO:0000314"/>
    <property type="project" value="HPA"/>
</dbReference>
<dbReference type="GO" id="GO:0005815">
    <property type="term" value="C:microtubule organizing center"/>
    <property type="evidence" value="ECO:0000314"/>
    <property type="project" value="UniProtKB"/>
</dbReference>
<dbReference type="GO" id="GO:0030496">
    <property type="term" value="C:midbody"/>
    <property type="evidence" value="ECO:0000314"/>
    <property type="project" value="UniProtKB"/>
</dbReference>
<dbReference type="GO" id="GO:0072686">
    <property type="term" value="C:mitotic spindle"/>
    <property type="evidence" value="ECO:0000314"/>
    <property type="project" value="UniProtKB"/>
</dbReference>
<dbReference type="GO" id="GO:0043014">
    <property type="term" value="F:alpha-tubulin binding"/>
    <property type="evidence" value="ECO:0000314"/>
    <property type="project" value="UniProtKB"/>
</dbReference>
<dbReference type="GO" id="GO:0048487">
    <property type="term" value="F:beta-tubulin binding"/>
    <property type="evidence" value="ECO:0000314"/>
    <property type="project" value="UniProtKB"/>
</dbReference>
<dbReference type="GO" id="GO:0008017">
    <property type="term" value="F:microtubule binding"/>
    <property type="evidence" value="ECO:0000318"/>
    <property type="project" value="GO_Central"/>
</dbReference>
<dbReference type="GO" id="GO:0008608">
    <property type="term" value="P:attachment of spindle microtubules to kinetochore"/>
    <property type="evidence" value="ECO:0000315"/>
    <property type="project" value="UniProtKB"/>
</dbReference>
<dbReference type="GO" id="GO:0051301">
    <property type="term" value="P:cell division"/>
    <property type="evidence" value="ECO:0007669"/>
    <property type="project" value="UniProtKB-KW"/>
</dbReference>
<dbReference type="GO" id="GO:0000226">
    <property type="term" value="P:microtubule cytoskeleton organization"/>
    <property type="evidence" value="ECO:0000318"/>
    <property type="project" value="GO_Central"/>
</dbReference>
<dbReference type="GO" id="GO:0007017">
    <property type="term" value="P:microtubule-based process"/>
    <property type="evidence" value="ECO:0000303"/>
    <property type="project" value="UniProtKB"/>
</dbReference>
<dbReference type="GO" id="GO:0000278">
    <property type="term" value="P:mitotic cell cycle"/>
    <property type="evidence" value="ECO:0000303"/>
    <property type="project" value="UniProtKB"/>
</dbReference>
<dbReference type="GO" id="GO:0007080">
    <property type="term" value="P:mitotic metaphase chromosome alignment"/>
    <property type="evidence" value="ECO:0000315"/>
    <property type="project" value="UniProtKB"/>
</dbReference>
<dbReference type="CDD" id="cd21950">
    <property type="entry name" value="TD_EMAP4"/>
    <property type="match status" value="1"/>
</dbReference>
<dbReference type="DisProt" id="DP02645"/>
<dbReference type="FunFam" id="2.130.10.10:FF:000019">
    <property type="entry name" value="echinoderm microtubule-associated protein-like 4 isoform X2"/>
    <property type="match status" value="1"/>
</dbReference>
<dbReference type="FunFam" id="2.130.10.10:FF:003552">
    <property type="entry name" value="Uncharacterized protein"/>
    <property type="match status" value="1"/>
</dbReference>
<dbReference type="Gene3D" id="2.130.10.10">
    <property type="entry name" value="YVTN repeat-like/Quinoprotein amine dehydrogenase"/>
    <property type="match status" value="2"/>
</dbReference>
<dbReference type="InterPro" id="IPR055442">
    <property type="entry name" value="Beta-prop_EML-like_2nd"/>
</dbReference>
<dbReference type="InterPro" id="IPR055439">
    <property type="entry name" value="Beta-prop_EML_1st"/>
</dbReference>
<dbReference type="InterPro" id="IPR005108">
    <property type="entry name" value="HELP"/>
</dbReference>
<dbReference type="InterPro" id="IPR011047">
    <property type="entry name" value="Quinoprotein_ADH-like_sf"/>
</dbReference>
<dbReference type="InterPro" id="IPR015943">
    <property type="entry name" value="WD40/YVTN_repeat-like_dom_sf"/>
</dbReference>
<dbReference type="InterPro" id="IPR036322">
    <property type="entry name" value="WD40_repeat_dom_sf"/>
</dbReference>
<dbReference type="InterPro" id="IPR001680">
    <property type="entry name" value="WD40_rpt"/>
</dbReference>
<dbReference type="InterPro" id="IPR050630">
    <property type="entry name" value="WD_repeat_EMAP"/>
</dbReference>
<dbReference type="PANTHER" id="PTHR13720:SF11">
    <property type="entry name" value="ECHINODERM MICROTUBULE-ASSOCIATED PROTEIN-LIKE 4"/>
    <property type="match status" value="1"/>
</dbReference>
<dbReference type="PANTHER" id="PTHR13720">
    <property type="entry name" value="WD-40 REPEAT PROTEIN"/>
    <property type="match status" value="1"/>
</dbReference>
<dbReference type="Pfam" id="PF23409">
    <property type="entry name" value="Beta-prop_EML"/>
    <property type="match status" value="1"/>
</dbReference>
<dbReference type="Pfam" id="PF23414">
    <property type="entry name" value="Beta-prop_EML_2"/>
    <property type="match status" value="1"/>
</dbReference>
<dbReference type="Pfam" id="PF03451">
    <property type="entry name" value="HELP"/>
    <property type="match status" value="1"/>
</dbReference>
<dbReference type="SMART" id="SM00320">
    <property type="entry name" value="WD40"/>
    <property type="match status" value="9"/>
</dbReference>
<dbReference type="SUPFAM" id="SSF50998">
    <property type="entry name" value="Quinoprotein alcohol dehydrogenase-like"/>
    <property type="match status" value="1"/>
</dbReference>
<dbReference type="SUPFAM" id="SSF50978">
    <property type="entry name" value="WD40 repeat-like"/>
    <property type="match status" value="1"/>
</dbReference>
<dbReference type="PROSITE" id="PS00678">
    <property type="entry name" value="WD_REPEATS_1"/>
    <property type="match status" value="1"/>
</dbReference>
<dbReference type="PROSITE" id="PS50082">
    <property type="entry name" value="WD_REPEATS_2"/>
    <property type="match status" value="4"/>
</dbReference>
<dbReference type="PROSITE" id="PS50294">
    <property type="entry name" value="WD_REPEATS_REGION"/>
    <property type="match status" value="3"/>
</dbReference>